<gene>
    <name type="primary">xlnB</name>
    <name type="synonym">xynB</name>
    <name type="synonym">xynG1</name>
    <name type="ORF">NFIA_058160</name>
</gene>
<feature type="signal peptide" evidence="2">
    <location>
        <begin position="1"/>
        <end position="19"/>
    </location>
</feature>
<feature type="chain" id="PRO_0000393170" description="Probable endo-1,4-beta-xylanase B">
    <location>
        <begin position="20"/>
        <end position="221"/>
    </location>
</feature>
<feature type="domain" description="GH11" evidence="3">
    <location>
        <begin position="33"/>
        <end position="221"/>
    </location>
</feature>
<feature type="active site" description="Nucleophile" evidence="4">
    <location>
        <position position="117"/>
    </location>
</feature>
<feature type="active site" description="Proton donor" evidence="5">
    <location>
        <position position="208"/>
    </location>
</feature>
<sequence>MVSFSSLVLALSTVAGVLAAPGSEQYVELAKRQLTSSQTGTNNGYFYSFWTDGGGKVTYNNGNGGQYQVDWTNCGNFVAGKGWNPGSERTVTYSGSWESSGNGYLSVYGWMTNPLVEYYIVESYGSYDPSTGATHLGTVESDGGTYNIYKTTRTNAPSIQGTATFDQYWSVRTSHRVSGTVTTKNHFDAWKKAGLKLGNFDYMIVATEGYQSSGSATLTVS</sequence>
<dbReference type="EC" id="3.2.1.8"/>
<dbReference type="EMBL" id="DS027698">
    <property type="protein sequence ID" value="EAW16466.1"/>
    <property type="molecule type" value="Genomic_DNA"/>
</dbReference>
<dbReference type="RefSeq" id="XP_001258363.1">
    <property type="nucleotide sequence ID" value="XM_001258362.1"/>
</dbReference>
<dbReference type="SMR" id="A1DNU5"/>
<dbReference type="STRING" id="331117.A1DNU5"/>
<dbReference type="EnsemblFungi" id="EAW16466">
    <property type="protein sequence ID" value="EAW16466"/>
    <property type="gene ID" value="NFIA_058160"/>
</dbReference>
<dbReference type="GeneID" id="4584879"/>
<dbReference type="KEGG" id="nfi:NFIA_058160"/>
<dbReference type="VEuPathDB" id="FungiDB:NFIA_058160"/>
<dbReference type="eggNOG" id="ENOG502RXA7">
    <property type="taxonomic scope" value="Eukaryota"/>
</dbReference>
<dbReference type="HOGENOM" id="CLU_052631_0_0_1"/>
<dbReference type="OMA" id="VDWTNCG"/>
<dbReference type="OrthoDB" id="2115822at2759"/>
<dbReference type="UniPathway" id="UPA00114"/>
<dbReference type="Proteomes" id="UP000006702">
    <property type="component" value="Unassembled WGS sequence"/>
</dbReference>
<dbReference type="GO" id="GO:0005576">
    <property type="term" value="C:extracellular region"/>
    <property type="evidence" value="ECO:0000250"/>
    <property type="project" value="UniProtKB"/>
</dbReference>
<dbReference type="GO" id="GO:0031176">
    <property type="term" value="F:endo-1,4-beta-xylanase activity"/>
    <property type="evidence" value="ECO:0000250"/>
    <property type="project" value="UniProtKB"/>
</dbReference>
<dbReference type="GO" id="GO:0045493">
    <property type="term" value="P:xylan catabolic process"/>
    <property type="evidence" value="ECO:0000250"/>
    <property type="project" value="UniProtKB"/>
</dbReference>
<dbReference type="FunFam" id="2.60.120.180:FF:000001">
    <property type="entry name" value="Endo-1,4-beta-xylanase"/>
    <property type="match status" value="1"/>
</dbReference>
<dbReference type="Gene3D" id="2.60.120.180">
    <property type="match status" value="1"/>
</dbReference>
<dbReference type="InterPro" id="IPR013320">
    <property type="entry name" value="ConA-like_dom_sf"/>
</dbReference>
<dbReference type="InterPro" id="IPR013319">
    <property type="entry name" value="GH11/12"/>
</dbReference>
<dbReference type="InterPro" id="IPR018208">
    <property type="entry name" value="GH11_AS_1"/>
</dbReference>
<dbReference type="InterPro" id="IPR033119">
    <property type="entry name" value="GH11_AS_2"/>
</dbReference>
<dbReference type="InterPro" id="IPR033123">
    <property type="entry name" value="GH11_dom"/>
</dbReference>
<dbReference type="InterPro" id="IPR001137">
    <property type="entry name" value="Glyco_hydro_11"/>
</dbReference>
<dbReference type="PANTHER" id="PTHR46828">
    <property type="entry name" value="ENDO-1,4-BETA-XYLANASE A-RELATED"/>
    <property type="match status" value="1"/>
</dbReference>
<dbReference type="PANTHER" id="PTHR46828:SF2">
    <property type="entry name" value="ENDO-1,4-BETA-XYLANASE A-RELATED"/>
    <property type="match status" value="1"/>
</dbReference>
<dbReference type="Pfam" id="PF00457">
    <property type="entry name" value="Glyco_hydro_11"/>
    <property type="match status" value="1"/>
</dbReference>
<dbReference type="PRINTS" id="PR00911">
    <property type="entry name" value="GLHYDRLASE11"/>
</dbReference>
<dbReference type="SUPFAM" id="SSF49899">
    <property type="entry name" value="Concanavalin A-like lectins/glucanases"/>
    <property type="match status" value="1"/>
</dbReference>
<dbReference type="PROSITE" id="PS00776">
    <property type="entry name" value="GH11_1"/>
    <property type="match status" value="1"/>
</dbReference>
<dbReference type="PROSITE" id="PS00777">
    <property type="entry name" value="GH11_2"/>
    <property type="match status" value="1"/>
</dbReference>
<dbReference type="PROSITE" id="PS51761">
    <property type="entry name" value="GH11_3"/>
    <property type="match status" value="1"/>
</dbReference>
<accession>A1DNU5</accession>
<reference key="1">
    <citation type="journal article" date="2008" name="PLoS Genet.">
        <title>Genomic islands in the pathogenic filamentous fungus Aspergillus fumigatus.</title>
        <authorList>
            <person name="Fedorova N.D."/>
            <person name="Khaldi N."/>
            <person name="Joardar V.S."/>
            <person name="Maiti R."/>
            <person name="Amedeo P."/>
            <person name="Anderson M.J."/>
            <person name="Crabtree J."/>
            <person name="Silva J.C."/>
            <person name="Badger J.H."/>
            <person name="Albarraq A."/>
            <person name="Angiuoli S."/>
            <person name="Bussey H."/>
            <person name="Bowyer P."/>
            <person name="Cotty P.J."/>
            <person name="Dyer P.S."/>
            <person name="Egan A."/>
            <person name="Galens K."/>
            <person name="Fraser-Liggett C.M."/>
            <person name="Haas B.J."/>
            <person name="Inman J.M."/>
            <person name="Kent R."/>
            <person name="Lemieux S."/>
            <person name="Malavazi I."/>
            <person name="Orvis J."/>
            <person name="Roemer T."/>
            <person name="Ronning C.M."/>
            <person name="Sundaram J.P."/>
            <person name="Sutton G."/>
            <person name="Turner G."/>
            <person name="Venter J.C."/>
            <person name="White O.R."/>
            <person name="Whitty B.R."/>
            <person name="Youngman P."/>
            <person name="Wolfe K.H."/>
            <person name="Goldman G.H."/>
            <person name="Wortman J.R."/>
            <person name="Jiang B."/>
            <person name="Denning D.W."/>
            <person name="Nierman W.C."/>
        </authorList>
    </citation>
    <scope>NUCLEOTIDE SEQUENCE [LARGE SCALE GENOMIC DNA]</scope>
    <source>
        <strain>ATCC 1020 / DSM 3700 / CBS 544.65 / FGSC A1164 / JCM 1740 / NRRL 181 / WB 181</strain>
    </source>
</reference>
<keyword id="KW-0119">Carbohydrate metabolism</keyword>
<keyword id="KW-0326">Glycosidase</keyword>
<keyword id="KW-0378">Hydrolase</keyword>
<keyword id="KW-0624">Polysaccharide degradation</keyword>
<keyword id="KW-1185">Reference proteome</keyword>
<keyword id="KW-0964">Secreted</keyword>
<keyword id="KW-0732">Signal</keyword>
<keyword id="KW-0858">Xylan degradation</keyword>
<proteinExistence type="inferred from homology"/>
<evidence type="ECO:0000250" key="1"/>
<evidence type="ECO:0000255" key="2"/>
<evidence type="ECO:0000255" key="3">
    <source>
        <dbReference type="PROSITE-ProRule" id="PRU01097"/>
    </source>
</evidence>
<evidence type="ECO:0000255" key="4">
    <source>
        <dbReference type="PROSITE-ProRule" id="PRU10062"/>
    </source>
</evidence>
<evidence type="ECO:0000255" key="5">
    <source>
        <dbReference type="PROSITE-ProRule" id="PRU10063"/>
    </source>
</evidence>
<evidence type="ECO:0000305" key="6"/>
<organism>
    <name type="scientific">Neosartorya fischeri (strain ATCC 1020 / DSM 3700 / CBS 544.65 / FGSC A1164 / JCM 1740 / NRRL 181 / WB 181)</name>
    <name type="common">Aspergillus fischerianus</name>
    <dbReference type="NCBI Taxonomy" id="331117"/>
    <lineage>
        <taxon>Eukaryota</taxon>
        <taxon>Fungi</taxon>
        <taxon>Dikarya</taxon>
        <taxon>Ascomycota</taxon>
        <taxon>Pezizomycotina</taxon>
        <taxon>Eurotiomycetes</taxon>
        <taxon>Eurotiomycetidae</taxon>
        <taxon>Eurotiales</taxon>
        <taxon>Aspergillaceae</taxon>
        <taxon>Aspergillus</taxon>
        <taxon>Aspergillus subgen. Fumigati</taxon>
    </lineage>
</organism>
<name>XYNB_NEOFI</name>
<protein>
    <recommendedName>
        <fullName>Probable endo-1,4-beta-xylanase B</fullName>
        <shortName>Xylanase B</shortName>
        <ecNumber>3.2.1.8</ecNumber>
    </recommendedName>
    <alternativeName>
        <fullName>1,4-beta-D-xylan xylanohydrolase B</fullName>
    </alternativeName>
    <alternativeName>
        <fullName>Endo-1,4-beta-xylanase G1</fullName>
        <shortName>Xylanase G1</shortName>
    </alternativeName>
</protein>
<comment type="function">
    <text evidence="1">Endo-1,4-beta-xylanase involved in the hydrolysis of xylan, a major structural heterogeneous polysaccharide found in plant biomass representing the second most abundant polysaccharide in the biosphere, after cellulose.</text>
</comment>
<comment type="catalytic activity">
    <reaction>
        <text>Endohydrolysis of (1-&gt;4)-beta-D-xylosidic linkages in xylans.</text>
        <dbReference type="EC" id="3.2.1.8"/>
    </reaction>
</comment>
<comment type="pathway">
    <text>Glycan degradation; xylan degradation.</text>
</comment>
<comment type="subcellular location">
    <subcellularLocation>
        <location evidence="1">Secreted</location>
    </subcellularLocation>
</comment>
<comment type="similarity">
    <text evidence="6">Belongs to the glycosyl hydrolase 11 (cellulase G) family.</text>
</comment>